<dbReference type="EC" id="2.1.2.3" evidence="2"/>
<dbReference type="EC" id="3.5.4.10" evidence="2"/>
<dbReference type="EMBL" id="D89514">
    <property type="protein sequence ID" value="BAA22837.1"/>
    <property type="molecule type" value="mRNA"/>
</dbReference>
<dbReference type="EMBL" id="BC072496">
    <property type="protein sequence ID" value="AAH72496.1"/>
    <property type="molecule type" value="mRNA"/>
</dbReference>
<dbReference type="RefSeq" id="NP_112276.2">
    <property type="nucleotide sequence ID" value="NM_031014.2"/>
</dbReference>
<dbReference type="SMR" id="O35567"/>
<dbReference type="BioGRID" id="249543">
    <property type="interactions" value="3"/>
</dbReference>
<dbReference type="FunCoup" id="O35567">
    <property type="interactions" value="3154"/>
</dbReference>
<dbReference type="IntAct" id="O35567">
    <property type="interactions" value="3"/>
</dbReference>
<dbReference type="MINT" id="O35567"/>
<dbReference type="STRING" id="10116.ENSRNOP00000021105"/>
<dbReference type="iPTMnet" id="O35567"/>
<dbReference type="PhosphoSitePlus" id="O35567"/>
<dbReference type="SwissPalm" id="O35567"/>
<dbReference type="jPOST" id="O35567"/>
<dbReference type="PaxDb" id="10116-ENSRNOP00000021105"/>
<dbReference type="Ensembl" id="ENSRNOT00000098789.1">
    <property type="protein sequence ID" value="ENSRNOP00000084375.1"/>
    <property type="gene ID" value="ENSRNOG00000015511.5"/>
</dbReference>
<dbReference type="Ensembl" id="ENSRNOT00000116844.1">
    <property type="protein sequence ID" value="ENSRNOP00000078278.1"/>
    <property type="gene ID" value="ENSRNOG00000015511.5"/>
</dbReference>
<dbReference type="GeneID" id="81643"/>
<dbReference type="KEGG" id="rno:81643"/>
<dbReference type="UCSC" id="RGD:70879">
    <property type="organism name" value="rat"/>
</dbReference>
<dbReference type="AGR" id="RGD:70879"/>
<dbReference type="CTD" id="471"/>
<dbReference type="RGD" id="70879">
    <property type="gene designation" value="Atic"/>
</dbReference>
<dbReference type="eggNOG" id="KOG2555">
    <property type="taxonomic scope" value="Eukaryota"/>
</dbReference>
<dbReference type="GeneTree" id="ENSGT00390000004553"/>
<dbReference type="HOGENOM" id="CLU_016316_3_2_1"/>
<dbReference type="InParanoid" id="O35567"/>
<dbReference type="OMA" id="IKHNNPC"/>
<dbReference type="OrthoDB" id="6017153at2759"/>
<dbReference type="PhylomeDB" id="O35567"/>
<dbReference type="TreeFam" id="TF105642"/>
<dbReference type="BRENDA" id="2.1.2.3">
    <property type="organism ID" value="5301"/>
</dbReference>
<dbReference type="BRENDA" id="3.5.4.10">
    <property type="organism ID" value="5301"/>
</dbReference>
<dbReference type="Reactome" id="R-RNO-73817">
    <property type="pathway name" value="Purine ribonucleoside monophosphate biosynthesis"/>
</dbReference>
<dbReference type="UniPathway" id="UPA00074">
    <property type="reaction ID" value="UER00133"/>
</dbReference>
<dbReference type="UniPathway" id="UPA00074">
    <property type="reaction ID" value="UER00135"/>
</dbReference>
<dbReference type="PRO" id="PR:O35567"/>
<dbReference type="Proteomes" id="UP000002494">
    <property type="component" value="Chromosome 9"/>
</dbReference>
<dbReference type="Bgee" id="ENSRNOG00000015511">
    <property type="expression patterns" value="Expressed in thymus and 19 other cell types or tissues"/>
</dbReference>
<dbReference type="GO" id="GO:0005829">
    <property type="term" value="C:cytosol"/>
    <property type="evidence" value="ECO:0000318"/>
    <property type="project" value="GO_Central"/>
</dbReference>
<dbReference type="GO" id="GO:0005886">
    <property type="term" value="C:plasma membrane"/>
    <property type="evidence" value="ECO:0007669"/>
    <property type="project" value="Ensembl"/>
</dbReference>
<dbReference type="GO" id="GO:0003937">
    <property type="term" value="F:IMP cyclohydrolase activity"/>
    <property type="evidence" value="ECO:0000314"/>
    <property type="project" value="RGD"/>
</dbReference>
<dbReference type="GO" id="GO:0004643">
    <property type="term" value="F:phosphoribosylaminoimidazolecarboxamide formyltransferase activity"/>
    <property type="evidence" value="ECO:0000314"/>
    <property type="project" value="RGD"/>
</dbReference>
<dbReference type="GO" id="GO:0042803">
    <property type="term" value="F:protein homodimerization activity"/>
    <property type="evidence" value="ECO:0000250"/>
    <property type="project" value="UniProtKB"/>
</dbReference>
<dbReference type="GO" id="GO:0044208">
    <property type="term" value="P:'de novo' AMP biosynthetic process"/>
    <property type="evidence" value="ECO:0000266"/>
    <property type="project" value="RGD"/>
</dbReference>
<dbReference type="GO" id="GO:0006189">
    <property type="term" value="P:'de novo' IMP biosynthetic process"/>
    <property type="evidence" value="ECO:0000314"/>
    <property type="project" value="RGD"/>
</dbReference>
<dbReference type="GO" id="GO:0097294">
    <property type="term" value="P:'de novo' XMP biosynthetic process"/>
    <property type="evidence" value="ECO:0000266"/>
    <property type="project" value="RGD"/>
</dbReference>
<dbReference type="GO" id="GO:0031100">
    <property type="term" value="P:animal organ regeneration"/>
    <property type="evidence" value="ECO:0000270"/>
    <property type="project" value="RGD"/>
</dbReference>
<dbReference type="GO" id="GO:0003360">
    <property type="term" value="P:brainstem development"/>
    <property type="evidence" value="ECO:0000270"/>
    <property type="project" value="RGD"/>
</dbReference>
<dbReference type="GO" id="GO:0098761">
    <property type="term" value="P:cellular response to interleukin-7"/>
    <property type="evidence" value="ECO:0000266"/>
    <property type="project" value="RGD"/>
</dbReference>
<dbReference type="GO" id="GO:0021549">
    <property type="term" value="P:cerebellum development"/>
    <property type="evidence" value="ECO:0000270"/>
    <property type="project" value="RGD"/>
</dbReference>
<dbReference type="GO" id="GO:0021987">
    <property type="term" value="P:cerebral cortex development"/>
    <property type="evidence" value="ECO:0000270"/>
    <property type="project" value="RGD"/>
</dbReference>
<dbReference type="GO" id="GO:0046452">
    <property type="term" value="P:dihydrofolate metabolic process"/>
    <property type="evidence" value="ECO:0000314"/>
    <property type="project" value="RGD"/>
</dbReference>
<dbReference type="GO" id="GO:0006177">
    <property type="term" value="P:GMP biosynthetic process"/>
    <property type="evidence" value="ECO:0000266"/>
    <property type="project" value="RGD"/>
</dbReference>
<dbReference type="GO" id="GO:0046654">
    <property type="term" value="P:tetrahydrofolate biosynthetic process"/>
    <property type="evidence" value="ECO:0000314"/>
    <property type="project" value="RGD"/>
</dbReference>
<dbReference type="CDD" id="cd01421">
    <property type="entry name" value="IMPCH"/>
    <property type="match status" value="1"/>
</dbReference>
<dbReference type="FunFam" id="3.40.140.20:FF:000003">
    <property type="entry name" value="Bifunctional purine biosynthesis protein"/>
    <property type="match status" value="1"/>
</dbReference>
<dbReference type="FunFam" id="3.40.50.1380:FF:000003">
    <property type="entry name" value="Bifunctional purine biosynthesis protein"/>
    <property type="match status" value="1"/>
</dbReference>
<dbReference type="FunFam" id="1.10.287.440:FF:000001">
    <property type="entry name" value="Bifunctional purine biosynthesis protein PURH"/>
    <property type="match status" value="1"/>
</dbReference>
<dbReference type="Gene3D" id="1.10.287.440">
    <property type="match status" value="1"/>
</dbReference>
<dbReference type="Gene3D" id="3.40.140.20">
    <property type="match status" value="2"/>
</dbReference>
<dbReference type="Gene3D" id="3.40.50.1380">
    <property type="entry name" value="Methylglyoxal synthase-like domain"/>
    <property type="match status" value="1"/>
</dbReference>
<dbReference type="HAMAP" id="MF_00139">
    <property type="entry name" value="PurH"/>
    <property type="match status" value="1"/>
</dbReference>
<dbReference type="InterPro" id="IPR024051">
    <property type="entry name" value="AICAR_Tfase_dup_dom_sf"/>
</dbReference>
<dbReference type="InterPro" id="IPR024050">
    <property type="entry name" value="AICAR_Tfase_insert_dom_sf"/>
</dbReference>
<dbReference type="InterPro" id="IPR016193">
    <property type="entry name" value="Cytidine_deaminase-like"/>
</dbReference>
<dbReference type="InterPro" id="IPR011607">
    <property type="entry name" value="MGS-like_dom"/>
</dbReference>
<dbReference type="InterPro" id="IPR036914">
    <property type="entry name" value="MGS-like_dom_sf"/>
</dbReference>
<dbReference type="InterPro" id="IPR002695">
    <property type="entry name" value="PurH-like"/>
</dbReference>
<dbReference type="NCBIfam" id="NF005492">
    <property type="entry name" value="PRK07106.1"/>
    <property type="match status" value="1"/>
</dbReference>
<dbReference type="NCBIfam" id="TIGR00355">
    <property type="entry name" value="purH"/>
    <property type="match status" value="1"/>
</dbReference>
<dbReference type="PANTHER" id="PTHR11692:SF0">
    <property type="entry name" value="BIFUNCTIONAL PURINE BIOSYNTHESIS PROTEIN ATIC"/>
    <property type="match status" value="1"/>
</dbReference>
<dbReference type="PANTHER" id="PTHR11692">
    <property type="entry name" value="BIFUNCTIONAL PURINE BIOSYNTHESIS PROTEIN PURH"/>
    <property type="match status" value="1"/>
</dbReference>
<dbReference type="Pfam" id="PF01808">
    <property type="entry name" value="AICARFT_IMPCHas"/>
    <property type="match status" value="1"/>
</dbReference>
<dbReference type="Pfam" id="PF02142">
    <property type="entry name" value="MGS"/>
    <property type="match status" value="1"/>
</dbReference>
<dbReference type="PIRSF" id="PIRSF000414">
    <property type="entry name" value="AICARFT_IMPCHas"/>
    <property type="match status" value="1"/>
</dbReference>
<dbReference type="SMART" id="SM00798">
    <property type="entry name" value="AICARFT_IMPCHas"/>
    <property type="match status" value="1"/>
</dbReference>
<dbReference type="SMART" id="SM00851">
    <property type="entry name" value="MGS"/>
    <property type="match status" value="1"/>
</dbReference>
<dbReference type="SUPFAM" id="SSF53927">
    <property type="entry name" value="Cytidine deaminase-like"/>
    <property type="match status" value="1"/>
</dbReference>
<dbReference type="SUPFAM" id="SSF52335">
    <property type="entry name" value="Methylglyoxal synthase-like"/>
    <property type="match status" value="1"/>
</dbReference>
<dbReference type="PROSITE" id="PS51855">
    <property type="entry name" value="MGS"/>
    <property type="match status" value="1"/>
</dbReference>
<organism>
    <name type="scientific">Rattus norvegicus</name>
    <name type="common">Rat</name>
    <dbReference type="NCBI Taxonomy" id="10116"/>
    <lineage>
        <taxon>Eukaryota</taxon>
        <taxon>Metazoa</taxon>
        <taxon>Chordata</taxon>
        <taxon>Craniata</taxon>
        <taxon>Vertebrata</taxon>
        <taxon>Euteleostomi</taxon>
        <taxon>Mammalia</taxon>
        <taxon>Eutheria</taxon>
        <taxon>Euarchontoglires</taxon>
        <taxon>Glires</taxon>
        <taxon>Rodentia</taxon>
        <taxon>Myomorpha</taxon>
        <taxon>Muroidea</taxon>
        <taxon>Muridae</taxon>
        <taxon>Murinae</taxon>
        <taxon>Rattus</taxon>
    </lineage>
</organism>
<evidence type="ECO:0000250" key="1">
    <source>
        <dbReference type="UniProtKB" id="P31335"/>
    </source>
</evidence>
<evidence type="ECO:0000250" key="2">
    <source>
        <dbReference type="UniProtKB" id="P31939"/>
    </source>
</evidence>
<evidence type="ECO:0000250" key="3">
    <source>
        <dbReference type="UniProtKB" id="P54113"/>
    </source>
</evidence>
<evidence type="ECO:0000255" key="4">
    <source>
        <dbReference type="PROSITE-ProRule" id="PRU01202"/>
    </source>
</evidence>
<evidence type="ECO:0000269" key="5">
    <source>
    </source>
</evidence>
<evidence type="ECO:0000269" key="6">
    <source>
    </source>
</evidence>
<evidence type="ECO:0000305" key="7"/>
<keyword id="KW-0007">Acetylation</keyword>
<keyword id="KW-0963">Cytoplasm</keyword>
<keyword id="KW-0903">Direct protein sequencing</keyword>
<keyword id="KW-0378">Hydrolase</keyword>
<keyword id="KW-0511">Multifunctional enzyme</keyword>
<keyword id="KW-0658">Purine biosynthesis</keyword>
<keyword id="KW-1185">Reference proteome</keyword>
<keyword id="KW-0808">Transferase</keyword>
<name>PUR9_RAT</name>
<gene>
    <name type="primary">Atic</name>
    <name type="synonym">Purh</name>
</gene>
<proteinExistence type="evidence at protein level"/>
<protein>
    <recommendedName>
        <fullName>Bifunctional purine biosynthesis protein ATIC</fullName>
    </recommendedName>
    <alternativeName>
        <fullName>AICAR transformylase/inosine monophosphate cyclohydrolase</fullName>
        <shortName>ATIC</shortName>
    </alternativeName>
    <domain>
        <recommendedName>
            <fullName>Phosphoribosylaminoimidazolecarboxamide formyltransferase</fullName>
            <ecNumber evidence="2">2.1.2.3</ecNumber>
        </recommendedName>
        <alternativeName>
            <fullName>5-aminoimidazole-4-carboxamide ribonucleotide formyltransferase</fullName>
            <shortName>AICAR formyltransferase</shortName>
        </alternativeName>
        <alternativeName>
            <fullName>AICAR transformylase</fullName>
        </alternativeName>
    </domain>
    <domain>
        <recommendedName>
            <fullName evidence="7">Inosine 5'-monophosphate cyclohydrolase</fullName>
            <shortName evidence="7">IMP cyclohydrolase</shortName>
            <ecNumber evidence="2">3.5.4.10</ecNumber>
        </recommendedName>
        <alternativeName>
            <fullName>IMP synthase</fullName>
        </alternativeName>
        <alternativeName>
            <fullName>Inosinicase</fullName>
        </alternativeName>
    </domain>
</protein>
<accession>O35567</accession>
<accession>Q6IN16</accession>
<feature type="chain" id="PRO_0000270214" description="Bifunctional purine biosynthesis protein ATIC">
    <location>
        <begin position="1"/>
        <end position="592"/>
    </location>
</feature>
<feature type="domain" description="MGS-like" evidence="4">
    <location>
        <begin position="1"/>
        <end position="146"/>
    </location>
</feature>
<feature type="region of interest" description="IMP cyclohydrolase" evidence="1">
    <location>
        <begin position="1"/>
        <end position="198"/>
    </location>
</feature>
<feature type="region of interest" description="AICAR formyltransferase" evidence="1">
    <location>
        <begin position="199"/>
        <end position="592"/>
    </location>
</feature>
<feature type="active site" description="Proton donor/acceptor; for FAICAR cyclization activity" evidence="2">
    <location>
        <position position="137"/>
    </location>
</feature>
<feature type="active site" description="Proton acceptor; for AICAR formyltransferase activity" evidence="2">
    <location>
        <position position="267"/>
    </location>
</feature>
<feature type="binding site" evidence="2">
    <location>
        <begin position="12"/>
        <end position="14"/>
    </location>
    <ligand>
        <name>IMP</name>
        <dbReference type="ChEBI" id="CHEBI:58053"/>
    </ligand>
</feature>
<feature type="binding site" evidence="2">
    <location>
        <begin position="34"/>
        <end position="37"/>
    </location>
    <ligand>
        <name>IMP</name>
        <dbReference type="ChEBI" id="CHEBI:58053"/>
    </ligand>
</feature>
<feature type="binding site" evidence="2">
    <location>
        <begin position="64"/>
        <end position="67"/>
    </location>
    <ligand>
        <name>IMP</name>
        <dbReference type="ChEBI" id="CHEBI:58053"/>
    </ligand>
</feature>
<feature type="binding site" evidence="2">
    <location>
        <begin position="101"/>
        <end position="102"/>
    </location>
    <ligand>
        <name>IMP</name>
        <dbReference type="ChEBI" id="CHEBI:58053"/>
    </ligand>
</feature>
<feature type="binding site" evidence="2">
    <location>
        <begin position="125"/>
        <end position="126"/>
    </location>
    <ligand>
        <name>IMP</name>
        <dbReference type="ChEBI" id="CHEBI:58053"/>
    </ligand>
</feature>
<feature type="binding site" description="in other chain" evidence="2">
    <location>
        <begin position="207"/>
        <end position="208"/>
    </location>
    <ligand>
        <name>5-amino-1-(5-phospho-beta-D-ribosyl)imidazole-4-carboxamide</name>
        <dbReference type="ChEBI" id="CHEBI:58475"/>
        <note>ligand shared between dimeric partners</note>
    </ligand>
</feature>
<feature type="binding site" description="in other chain" evidence="2">
    <location>
        <position position="267"/>
    </location>
    <ligand>
        <name>5-amino-1-(5-phospho-beta-D-ribosyl)imidazole-4-carboxamide</name>
        <dbReference type="ChEBI" id="CHEBI:58475"/>
        <note>ligand shared between dimeric partners</note>
    </ligand>
</feature>
<feature type="binding site" description="in other chain" evidence="2">
    <location>
        <position position="316"/>
    </location>
    <ligand>
        <name>5-amino-1-(5-phospho-beta-D-ribosyl)imidazole-4-carboxamide</name>
        <dbReference type="ChEBI" id="CHEBI:58475"/>
        <note>ligand shared between dimeric partners</note>
    </ligand>
</feature>
<feature type="binding site" description="in other chain" evidence="2">
    <location>
        <position position="339"/>
    </location>
    <ligand>
        <name>5-amino-1-(5-phospho-beta-D-ribosyl)imidazole-4-carboxamide</name>
        <dbReference type="ChEBI" id="CHEBI:58475"/>
        <note>ligand shared between dimeric partners</note>
    </ligand>
</feature>
<feature type="binding site" evidence="2">
    <location>
        <position position="431"/>
    </location>
    <ligand>
        <name>5-amino-1-(5-phospho-beta-D-ribosyl)imidazole-4-carboxamide</name>
        <dbReference type="ChEBI" id="CHEBI:58475"/>
        <note>ligand shared between dimeric partners</note>
    </ligand>
</feature>
<feature type="binding site" evidence="2">
    <location>
        <position position="451"/>
    </location>
    <ligand>
        <name>5-amino-1-(5-phospho-beta-D-ribosyl)imidazole-4-carboxamide</name>
        <dbReference type="ChEBI" id="CHEBI:58475"/>
        <note>ligand shared between dimeric partners</note>
    </ligand>
</feature>
<feature type="binding site" evidence="1">
    <location>
        <position position="452"/>
    </location>
    <ligand>
        <name>(6R)-10-formyltetrahydrofolate</name>
        <dbReference type="ChEBI" id="CHEBI:195366"/>
    </ligand>
</feature>
<feature type="binding site" evidence="2">
    <location>
        <position position="541"/>
    </location>
    <ligand>
        <name>5-amino-1-(5-phospho-beta-D-ribosyl)imidazole-4-carboxamide</name>
        <dbReference type="ChEBI" id="CHEBI:58475"/>
        <note>ligand shared between dimeric partners</note>
    </ligand>
</feature>
<feature type="binding site" evidence="1">
    <location>
        <position position="546"/>
    </location>
    <ligand>
        <name>(6R)-10-formyltetrahydrofolate</name>
        <dbReference type="ChEBI" id="CHEBI:195366"/>
    </ligand>
</feature>
<feature type="binding site" evidence="1">
    <location>
        <begin position="565"/>
        <end position="566"/>
    </location>
    <ligand>
        <name>(6R)-10-formyltetrahydrofolate</name>
        <dbReference type="ChEBI" id="CHEBI:195366"/>
    </ligand>
</feature>
<feature type="binding site" evidence="2">
    <location>
        <position position="588"/>
    </location>
    <ligand>
        <name>5-amino-1-(5-phospho-beta-D-ribosyl)imidazole-4-carboxamide</name>
        <dbReference type="ChEBI" id="CHEBI:58475"/>
        <note>ligand shared between dimeric partners</note>
    </ligand>
</feature>
<feature type="site" description="Transition state stabilizer" evidence="2">
    <location>
        <position position="266"/>
    </location>
</feature>
<feature type="modified residue" description="N-acetylmethionine" evidence="2">
    <location>
        <position position="1"/>
    </location>
</feature>
<feature type="modified residue" description="N6-acetyllysine" evidence="2">
    <location>
        <position position="199"/>
    </location>
</feature>
<feature type="sequence conflict" description="In Ref. 1; BAA22837." evidence="7" ref="1">
    <original>L</original>
    <variation>H</variation>
    <location>
        <position position="24"/>
    </location>
</feature>
<reference key="1">
    <citation type="journal article" date="1997" name="Gene">
        <title>Molecular cloning and expression of a rat cDNA encoding 5-aminoimidazole-4-carboxamide ribonucleotide formyltransferase/IMP cyclohydrolase.</title>
        <authorList>
            <person name="Akira T."/>
            <person name="Komatsu M."/>
            <person name="Nango R."/>
            <person name="Tomooka A."/>
            <person name="Konaka K."/>
            <person name="Yamauchi M."/>
            <person name="Kitamura Y."/>
            <person name="Nomura S."/>
            <person name="Tsukamoto I."/>
        </authorList>
    </citation>
    <scope>NUCLEOTIDE SEQUENCE [MRNA]</scope>
    <scope>TISSUE SPECIFICITY</scope>
    <source>
        <strain>Donryu</strain>
        <tissue>Liver</tissue>
    </source>
</reference>
<reference key="2">
    <citation type="journal article" date="2004" name="Genome Res.">
        <title>The status, quality, and expansion of the NIH full-length cDNA project: the Mammalian Gene Collection (MGC).</title>
        <authorList>
            <consortium name="The MGC Project Team"/>
        </authorList>
    </citation>
    <scope>NUCLEOTIDE SEQUENCE [LARGE SCALE MRNA]</scope>
    <source>
        <tissue>Lung</tissue>
    </source>
</reference>
<reference key="3">
    <citation type="submission" date="2006-11" db="UniProtKB">
        <authorList>
            <person name="Lubec G."/>
            <person name="Afjehi-Sadat L."/>
        </authorList>
    </citation>
    <scope>PROTEIN SEQUENCE OF 178-194; 531-545 AND 570-588</scope>
    <scope>IDENTIFICATION BY MASS SPECTROMETRY</scope>
    <source>
        <strain>Sprague-Dawley</strain>
        <tissue>Spinal cord</tissue>
    </source>
</reference>
<reference key="4">
    <citation type="journal article" date="2015" name="Mol. Cell. Proteomics">
        <title>The last enzyme of the de novo purine synthesis pathway 5-aminoimidazole-4-carboxamide ribonucleotide formyltransferase/IMP cyclohydrolase (ATIC) plays a central role in insulin signaling and the Golgi/endosomes protein network.</title>
        <authorList>
            <person name="Boutchueng-Djidjou M."/>
            <person name="Collard-Simard G."/>
            <person name="Fortier S."/>
            <person name="Hebert S.S."/>
            <person name="Kelly I."/>
            <person name="Landry C.R."/>
            <person name="Faure R.L."/>
        </authorList>
    </citation>
    <scope>FUNCTION</scope>
    <scope>SUBUNIT</scope>
    <scope>INTERACTION WITH INSR</scope>
</reference>
<comment type="function">
    <text evidence="2 5">Bifunctional enzyme that catalyzes the last two steps of purine biosynthesis. Acts as a transformylase that incorporates a formyl group to the AMP analog AICAR (5-amino-1-(5-phospho-beta-D-ribosyl)imidazole-4-carboxamide) to produce the intermediate formyl-AICAR (FAICAR). Can use both 10-formyldihydrofolate and 10-formyltetrahydrofolate as the formyl donor in this reaction. Also catalyzes the cyclization of FAICAR to inosine monophosphate (IMP) (By similarity). Promotes insulin receptor/INSR autophosphorylation and is involved in INSR internalization (PubMed:25687571).</text>
</comment>
<comment type="catalytic activity">
    <reaction evidence="2">
        <text>(6R)-10-formyltetrahydrofolate + 5-amino-1-(5-phospho-beta-D-ribosyl)imidazole-4-carboxamide = 5-formamido-1-(5-phospho-D-ribosyl)imidazole-4-carboxamide + (6S)-5,6,7,8-tetrahydrofolate</text>
        <dbReference type="Rhea" id="RHEA:22192"/>
        <dbReference type="ChEBI" id="CHEBI:57453"/>
        <dbReference type="ChEBI" id="CHEBI:58467"/>
        <dbReference type="ChEBI" id="CHEBI:58475"/>
        <dbReference type="ChEBI" id="CHEBI:195366"/>
        <dbReference type="EC" id="2.1.2.3"/>
    </reaction>
    <physiologicalReaction direction="left-to-right" evidence="2">
        <dbReference type="Rhea" id="RHEA:22193"/>
    </physiologicalReaction>
</comment>
<comment type="catalytic activity">
    <reaction evidence="2">
        <text>10-formyldihydrofolate + 5-amino-1-(5-phospho-beta-D-ribosyl)imidazole-4-carboxamide = 5-formamido-1-(5-phospho-D-ribosyl)imidazole-4-carboxamide + 7,8-dihydrofolate</text>
        <dbReference type="Rhea" id="RHEA:59144"/>
        <dbReference type="ChEBI" id="CHEBI:57451"/>
        <dbReference type="ChEBI" id="CHEBI:57452"/>
        <dbReference type="ChEBI" id="CHEBI:58467"/>
        <dbReference type="ChEBI" id="CHEBI:58475"/>
    </reaction>
    <physiologicalReaction direction="left-to-right" evidence="2">
        <dbReference type="Rhea" id="RHEA:59145"/>
    </physiologicalReaction>
</comment>
<comment type="catalytic activity">
    <reaction evidence="2">
        <text>IMP + H2O = 5-formamido-1-(5-phospho-D-ribosyl)imidazole-4-carboxamide</text>
        <dbReference type="Rhea" id="RHEA:18445"/>
        <dbReference type="ChEBI" id="CHEBI:15377"/>
        <dbReference type="ChEBI" id="CHEBI:58053"/>
        <dbReference type="ChEBI" id="CHEBI:58467"/>
        <dbReference type="EC" id="3.5.4.10"/>
    </reaction>
    <physiologicalReaction direction="right-to-left" evidence="2">
        <dbReference type="Rhea" id="RHEA:18447"/>
    </physiologicalReaction>
</comment>
<comment type="activity regulation">
    <text evidence="2">AMP and XMP inhibit AICAR formyltransferase activity.</text>
</comment>
<comment type="pathway">
    <text evidence="2">Purine metabolism; IMP biosynthesis via de novo pathway; 5-formamido-1-(5-phospho-D-ribosyl)imidazole-4-carboxamide from 5-amino-1-(5-phospho-D-ribosyl)imidazole-4-carboxamide (10-formyl THF route): step 1/1.</text>
</comment>
<comment type="pathway">
    <text evidence="2">Purine metabolism; IMP biosynthesis via de novo pathway; IMP from 5-formamido-1-(5-phospho-D-ribosyl)imidazole-4-carboxamide: step 1/1.</text>
</comment>
<comment type="subunit">
    <text evidence="2 5">Homodimer (By similarity). Associates with internalized INSR complexes on Golgi/endosomal membranes (PubMed:25687571). Interacts with INSR; ATIC together with PRKAA2/AMPK2 and HACD3/PTPLAD1 is proposed to be part of a signaling network regulating INSR autophosphorylation and endocytosis (PubMed:25687571).</text>
</comment>
<comment type="interaction">
    <interactant intactId="EBI-10768817">
        <id>O35567</id>
    </interactant>
    <interactant intactId="EBI-10768746">
        <id>PRO_0000016698</id>
        <label>Insr</label>
        <dbReference type="UniProtKB" id="P15127"/>
    </interactant>
    <organismsDiffer>false</organismsDiffer>
    <experiments>3</experiments>
</comment>
<comment type="subcellular location">
    <subcellularLocation>
        <location evidence="3">Cytoplasm</location>
        <location evidence="3">Cytosol</location>
    </subcellularLocation>
</comment>
<comment type="tissue specificity">
    <text evidence="6">Expressed in liver.</text>
</comment>
<comment type="domain">
    <text evidence="2">The IMP cyclohydrolase activity resides in the N-terminal region.</text>
</comment>
<comment type="miscellaneous">
    <text evidence="2">The de novo purine synthesis pathway includes 10 sequential steps, beginning with phosphoribosyl pyrophosphate and ending with inosine monophosphate (IMP), the first purine compound of the pathway.</text>
</comment>
<comment type="similarity">
    <text evidence="7">Belongs to the PurH family.</text>
</comment>
<sequence length="592" mass="64208">MASSQLALFSVSDKTGLVEFARNLASLGLSLVASGGTAKAIRDAGLAVRDVSELTGFPEMLGGRVKTLHPAVHAGILARNIPEDAADMARLDFNLIRVVVCNLYPFVKTVASPDVTVEAAVEQIDIGGVTLLRAAAKNHARVTVVCEPEDYGAVAAEMQGSGNKDTSLETRRHLALKAFTHTAQYDEAISDYFRRQYSKGISQMPLRYGMNPHQTPAQLYTLKPKLPITVLNGAPGFINLCDALNAWQLVTELRGAVDIPAAASFKHVSPAGAAVGVPLSEDEARVCMVYDLYPTLTPLAIAYARARGADRMSSFGDFVALSDVCDVPTAKIISREVSDGIVAPGYEEEALKILSKKKNGSYCVLQMDQSYKPDENEVRTLFGLRLSQKRNNGVVDKSLFSNIVTKNKDLPESALRDLIVATIAVKYTQSNSVCYAKDGQVIGIGAGQQSRIHCTRLAGDKANSWWLRHHPRVLSMKFKAGVKRAEVSNAIDQYVTGTIGEGEDLVKWKALFEEVPELLTEAEKKEWVDKLSGVSVSSDAFFPFRDNVDRAKRSGVAYIVAPSGSTADKVVIEACDELGIVLAHTDLRLFHH</sequence>